<name>IBPB_ECO24</name>
<gene>
    <name evidence="1" type="primary">ibpB</name>
    <name type="ordered locus">EcE24377A_4194</name>
</gene>
<proteinExistence type="inferred from homology"/>
<sequence length="142" mass="16093">MRNFDLSPLMRQWIGFDKLANALQNAGESQSFPPYNIEKSDDNHYRITLALAGFRQEDLEIQLEGTRLSVKGTPEQPKEEKKWLHQGLMNQPFSLSFTLAENMEVSGATFVNGLLHIDLIRNEPEPIAAQRIAISERPALNS</sequence>
<keyword id="KW-0143">Chaperone</keyword>
<keyword id="KW-0963">Cytoplasm</keyword>
<keyword id="KW-1185">Reference proteome</keyword>
<keyword id="KW-0346">Stress response</keyword>
<comment type="function">
    <text evidence="1">Associates with aggregated proteins, together with IbpA, to stabilize and protect them from irreversible denaturation and extensive proteolysis during heat shock and oxidative stress. Aggregated proteins bound to the IbpAB complex are more efficiently refolded and reactivated by the ATP-dependent chaperone systems ClpB and DnaK/DnaJ/GrpE. Its activity is ATP-independent.</text>
</comment>
<comment type="subunit">
    <text evidence="1">Homodimer. Forms homomultimers of about 100-150 subunits at optimal growth temperatures. Conformation changes to oligomers at high temperatures or high ionic concentrations. The decrease in size of the multimers is accompanied by an increase in chaperone activity.</text>
</comment>
<comment type="subcellular location">
    <subcellularLocation>
        <location evidence="1">Cytoplasm</location>
    </subcellularLocation>
</comment>
<comment type="domain">
    <text evidence="1">The N- and C-terminal flexible termini are involved in oligomerization and in the binding of non-native substrate proteins, and are essential for chaperone activity.</text>
</comment>
<comment type="similarity">
    <text evidence="1 2">Belongs to the small heat shock protein (HSP20) family.</text>
</comment>
<accession>A7ZTP0</accession>
<reference key="1">
    <citation type="journal article" date="2008" name="J. Bacteriol.">
        <title>The pangenome structure of Escherichia coli: comparative genomic analysis of E. coli commensal and pathogenic isolates.</title>
        <authorList>
            <person name="Rasko D.A."/>
            <person name="Rosovitz M.J."/>
            <person name="Myers G.S.A."/>
            <person name="Mongodin E.F."/>
            <person name="Fricke W.F."/>
            <person name="Gajer P."/>
            <person name="Crabtree J."/>
            <person name="Sebaihia M."/>
            <person name="Thomson N.R."/>
            <person name="Chaudhuri R."/>
            <person name="Henderson I.R."/>
            <person name="Sperandio V."/>
            <person name="Ravel J."/>
        </authorList>
    </citation>
    <scope>NUCLEOTIDE SEQUENCE [LARGE SCALE GENOMIC DNA]</scope>
    <source>
        <strain>E24377A / ETEC</strain>
    </source>
</reference>
<organism>
    <name type="scientific">Escherichia coli O139:H28 (strain E24377A / ETEC)</name>
    <dbReference type="NCBI Taxonomy" id="331111"/>
    <lineage>
        <taxon>Bacteria</taxon>
        <taxon>Pseudomonadati</taxon>
        <taxon>Pseudomonadota</taxon>
        <taxon>Gammaproteobacteria</taxon>
        <taxon>Enterobacterales</taxon>
        <taxon>Enterobacteriaceae</taxon>
        <taxon>Escherichia</taxon>
    </lineage>
</organism>
<evidence type="ECO:0000255" key="1">
    <source>
        <dbReference type="HAMAP-Rule" id="MF_02001"/>
    </source>
</evidence>
<evidence type="ECO:0000255" key="2">
    <source>
        <dbReference type="PROSITE-ProRule" id="PRU00285"/>
    </source>
</evidence>
<protein>
    <recommendedName>
        <fullName evidence="1">Small heat shock protein IbpB</fullName>
    </recommendedName>
    <alternativeName>
        <fullName evidence="1">16 kDa heat shock protein B</fullName>
    </alternativeName>
</protein>
<feature type="chain" id="PRO_1000070880" description="Small heat shock protein IbpB">
    <location>
        <begin position="1"/>
        <end position="142"/>
    </location>
</feature>
<feature type="domain" description="sHSP" evidence="2">
    <location>
        <begin position="26"/>
        <end position="137"/>
    </location>
</feature>
<dbReference type="EMBL" id="CP000800">
    <property type="protein sequence ID" value="ABV19312.1"/>
    <property type="molecule type" value="Genomic_DNA"/>
</dbReference>
<dbReference type="RefSeq" id="WP_001243431.1">
    <property type="nucleotide sequence ID" value="NC_009801.1"/>
</dbReference>
<dbReference type="SMR" id="A7ZTP0"/>
<dbReference type="GeneID" id="93778427"/>
<dbReference type="KEGG" id="ecw:EcE24377A_4194"/>
<dbReference type="HOGENOM" id="CLU_046737_4_2_6"/>
<dbReference type="Proteomes" id="UP000001122">
    <property type="component" value="Chromosome"/>
</dbReference>
<dbReference type="GO" id="GO:0005737">
    <property type="term" value="C:cytoplasm"/>
    <property type="evidence" value="ECO:0007669"/>
    <property type="project" value="UniProtKB-SubCell"/>
</dbReference>
<dbReference type="GO" id="GO:0050821">
    <property type="term" value="P:protein stabilization"/>
    <property type="evidence" value="ECO:0007669"/>
    <property type="project" value="UniProtKB-UniRule"/>
</dbReference>
<dbReference type="CDD" id="cd06470">
    <property type="entry name" value="ACD_IbpA-B_like"/>
    <property type="match status" value="1"/>
</dbReference>
<dbReference type="FunFam" id="2.60.40.790:FF:000005">
    <property type="entry name" value="Small heat shock protein IbpB"/>
    <property type="match status" value="1"/>
</dbReference>
<dbReference type="Gene3D" id="2.60.40.790">
    <property type="match status" value="1"/>
</dbReference>
<dbReference type="HAMAP" id="MF_02001">
    <property type="entry name" value="HSP20_IbpB"/>
    <property type="match status" value="1"/>
</dbReference>
<dbReference type="InterPro" id="IPR002068">
    <property type="entry name" value="A-crystallin/Hsp20_dom"/>
</dbReference>
<dbReference type="InterPro" id="IPR037913">
    <property type="entry name" value="ACD_IbpA/B"/>
</dbReference>
<dbReference type="InterPro" id="IPR008978">
    <property type="entry name" value="HSP20-like_chaperone"/>
</dbReference>
<dbReference type="InterPro" id="IPR022848">
    <property type="entry name" value="HSP20_IbpB"/>
</dbReference>
<dbReference type="NCBIfam" id="NF008618">
    <property type="entry name" value="PRK11597.1"/>
    <property type="match status" value="1"/>
</dbReference>
<dbReference type="PANTHER" id="PTHR47062">
    <property type="match status" value="1"/>
</dbReference>
<dbReference type="PANTHER" id="PTHR47062:SF2">
    <property type="entry name" value="SMALL HEAT SHOCK PROTEIN IBPB"/>
    <property type="match status" value="1"/>
</dbReference>
<dbReference type="Pfam" id="PF00011">
    <property type="entry name" value="HSP20"/>
    <property type="match status" value="1"/>
</dbReference>
<dbReference type="SUPFAM" id="SSF49764">
    <property type="entry name" value="HSP20-like chaperones"/>
    <property type="match status" value="1"/>
</dbReference>
<dbReference type="PROSITE" id="PS01031">
    <property type="entry name" value="SHSP"/>
    <property type="match status" value="1"/>
</dbReference>